<protein>
    <recommendedName>
        <fullName evidence="1">Vacuolar membrane protease</fullName>
        <ecNumber evidence="6">3.4.-.-</ecNumber>
    </recommendedName>
    <alternativeName>
        <fullName evidence="1">FXNA-related family protease 1</fullName>
    </alternativeName>
</protein>
<evidence type="ECO:0000250" key="1">
    <source>
        <dbReference type="UniProtKB" id="P38244"/>
    </source>
</evidence>
<evidence type="ECO:0000250" key="2">
    <source>
        <dbReference type="UniProtKB" id="P80561"/>
    </source>
</evidence>
<evidence type="ECO:0000255" key="3"/>
<evidence type="ECO:0000255" key="4">
    <source>
        <dbReference type="PROSITE-ProRule" id="PRU00498"/>
    </source>
</evidence>
<evidence type="ECO:0000256" key="5">
    <source>
        <dbReference type="SAM" id="MobiDB-lite"/>
    </source>
</evidence>
<evidence type="ECO:0000305" key="6"/>
<feature type="chain" id="PRO_0000411719" description="Vacuolar membrane protease">
    <location>
        <begin position="1"/>
        <end position="962"/>
    </location>
</feature>
<feature type="topological domain" description="Cytoplasmic" evidence="1">
    <location>
        <begin position="1"/>
        <end position="14"/>
    </location>
</feature>
<feature type="transmembrane region" description="Helical; Name=1" evidence="3">
    <location>
        <begin position="15"/>
        <end position="35"/>
    </location>
</feature>
<feature type="topological domain" description="Vacuolar" evidence="1">
    <location>
        <begin position="36"/>
        <end position="359"/>
    </location>
</feature>
<feature type="transmembrane region" description="Helical; Name=2" evidence="3">
    <location>
        <begin position="360"/>
        <end position="380"/>
    </location>
</feature>
<feature type="topological domain" description="Cytoplasmic" evidence="1">
    <location>
        <begin position="381"/>
        <end position="390"/>
    </location>
</feature>
<feature type="transmembrane region" description="Helical; Name=3" evidence="3">
    <location>
        <begin position="391"/>
        <end position="411"/>
    </location>
</feature>
<feature type="topological domain" description="Vacuolar" evidence="1">
    <location>
        <begin position="412"/>
        <end position="431"/>
    </location>
</feature>
<feature type="transmembrane region" description="Helical; Name=4" evidence="3">
    <location>
        <begin position="432"/>
        <end position="452"/>
    </location>
</feature>
<feature type="topological domain" description="Cytoplasmic" evidence="1">
    <location>
        <begin position="453"/>
        <end position="460"/>
    </location>
</feature>
<feature type="transmembrane region" description="Helical; Name=5" evidence="3">
    <location>
        <begin position="461"/>
        <end position="481"/>
    </location>
</feature>
<feature type="topological domain" description="Vacuolar" evidence="1">
    <location>
        <begin position="482"/>
        <end position="489"/>
    </location>
</feature>
<feature type="transmembrane region" description="Helical; Name=6" evidence="3">
    <location>
        <begin position="490"/>
        <end position="510"/>
    </location>
</feature>
<feature type="topological domain" description="Cytoplasmic" evidence="1">
    <location>
        <begin position="511"/>
        <end position="601"/>
    </location>
</feature>
<feature type="transmembrane region" description="Helical; Name=7" evidence="3">
    <location>
        <begin position="602"/>
        <end position="622"/>
    </location>
</feature>
<feature type="topological domain" description="Vacuolar" evidence="1">
    <location>
        <begin position="623"/>
        <end position="639"/>
    </location>
</feature>
<feature type="transmembrane region" description="Helical; Name=8" evidence="3">
    <location>
        <begin position="640"/>
        <end position="660"/>
    </location>
</feature>
<feature type="topological domain" description="Cytoplasmic" evidence="1">
    <location>
        <position position="661"/>
    </location>
</feature>
<feature type="transmembrane region" description="Helical; Name=9" evidence="3">
    <location>
        <begin position="662"/>
        <end position="682"/>
    </location>
</feature>
<feature type="topological domain" description="Vacuolar" evidence="1">
    <location>
        <begin position="683"/>
        <end position="962"/>
    </location>
</feature>
<feature type="region of interest" description="Disordered" evidence="5">
    <location>
        <begin position="531"/>
        <end position="563"/>
    </location>
</feature>
<feature type="compositionally biased region" description="Polar residues" evidence="5">
    <location>
        <begin position="531"/>
        <end position="554"/>
    </location>
</feature>
<feature type="active site" description="Proton acceptor" evidence="2">
    <location>
        <position position="197"/>
    </location>
</feature>
<feature type="binding site" evidence="2">
    <location>
        <position position="153"/>
    </location>
    <ligand>
        <name>Zn(2+)</name>
        <dbReference type="ChEBI" id="CHEBI:29105"/>
        <label>1</label>
        <note>catalytic</note>
    </ligand>
</feature>
<feature type="binding site" evidence="2">
    <location>
        <position position="165"/>
    </location>
    <ligand>
        <name>Zn(2+)</name>
        <dbReference type="ChEBI" id="CHEBI:29105"/>
        <label>1</label>
        <note>catalytic</note>
    </ligand>
</feature>
<feature type="binding site" evidence="2">
    <location>
        <position position="165"/>
    </location>
    <ligand>
        <name>Zn(2+)</name>
        <dbReference type="ChEBI" id="CHEBI:29105"/>
        <label>2</label>
        <note>catalytic</note>
    </ligand>
</feature>
<feature type="binding site" evidence="2">
    <location>
        <position position="198"/>
    </location>
    <ligand>
        <name>Zn(2+)</name>
        <dbReference type="ChEBI" id="CHEBI:29105"/>
        <label>2</label>
        <note>catalytic</note>
    </ligand>
</feature>
<feature type="binding site" evidence="2">
    <location>
        <position position="223"/>
    </location>
    <ligand>
        <name>Zn(2+)</name>
        <dbReference type="ChEBI" id="CHEBI:29105"/>
        <label>1</label>
        <note>catalytic</note>
    </ligand>
</feature>
<feature type="binding site" evidence="2">
    <location>
        <position position="297"/>
    </location>
    <ligand>
        <name>Zn(2+)</name>
        <dbReference type="ChEBI" id="CHEBI:29105"/>
        <label>2</label>
        <note>catalytic</note>
    </ligand>
</feature>
<feature type="site" description="Transition state stabilizer" evidence="2">
    <location>
        <position position="296"/>
    </location>
</feature>
<feature type="glycosylation site" description="N-linked (GlcNAc...) asparagine" evidence="4">
    <location>
        <position position="118"/>
    </location>
</feature>
<feature type="glycosylation site" description="N-linked (GlcNAc...) asparagine" evidence="4">
    <location>
        <position position="639"/>
    </location>
</feature>
<feature type="glycosylation site" description="N-linked (GlcNAc...) asparagine" evidence="4">
    <location>
        <position position="812"/>
    </location>
</feature>
<feature type="glycosylation site" description="N-linked (GlcNAc...) asparagine" evidence="4">
    <location>
        <position position="839"/>
    </location>
</feature>
<organism>
    <name type="scientific">Lachancea thermotolerans (strain ATCC 56472 / CBS 6340 / NRRL Y-8284)</name>
    <name type="common">Yeast</name>
    <name type="synonym">Kluyveromyces thermotolerans</name>
    <dbReference type="NCBI Taxonomy" id="559295"/>
    <lineage>
        <taxon>Eukaryota</taxon>
        <taxon>Fungi</taxon>
        <taxon>Dikarya</taxon>
        <taxon>Ascomycota</taxon>
        <taxon>Saccharomycotina</taxon>
        <taxon>Saccharomycetes</taxon>
        <taxon>Saccharomycetales</taxon>
        <taxon>Saccharomycetaceae</taxon>
        <taxon>Lachancea</taxon>
    </lineage>
</organism>
<reference key="1">
    <citation type="journal article" date="2009" name="Genome Res.">
        <title>Comparative genomics of protoploid Saccharomycetaceae.</title>
        <authorList>
            <consortium name="The Genolevures Consortium"/>
            <person name="Souciet J.-L."/>
            <person name="Dujon B."/>
            <person name="Gaillardin C."/>
            <person name="Johnston M."/>
            <person name="Baret P.V."/>
            <person name="Cliften P."/>
            <person name="Sherman D.J."/>
            <person name="Weissenbach J."/>
            <person name="Westhof E."/>
            <person name="Wincker P."/>
            <person name="Jubin C."/>
            <person name="Poulain J."/>
            <person name="Barbe V."/>
            <person name="Segurens B."/>
            <person name="Artiguenave F."/>
            <person name="Anthouard V."/>
            <person name="Vacherie B."/>
            <person name="Val M.-E."/>
            <person name="Fulton R.S."/>
            <person name="Minx P."/>
            <person name="Wilson R."/>
            <person name="Durrens P."/>
            <person name="Jean G."/>
            <person name="Marck C."/>
            <person name="Martin T."/>
            <person name="Nikolski M."/>
            <person name="Rolland T."/>
            <person name="Seret M.-L."/>
            <person name="Casaregola S."/>
            <person name="Despons L."/>
            <person name="Fairhead C."/>
            <person name="Fischer G."/>
            <person name="Lafontaine I."/>
            <person name="Leh V."/>
            <person name="Lemaire M."/>
            <person name="de Montigny J."/>
            <person name="Neuveglise C."/>
            <person name="Thierry A."/>
            <person name="Blanc-Lenfle I."/>
            <person name="Bleykasten C."/>
            <person name="Diffels J."/>
            <person name="Fritsch E."/>
            <person name="Frangeul L."/>
            <person name="Goeffon A."/>
            <person name="Jauniaux N."/>
            <person name="Kachouri-Lafond R."/>
            <person name="Payen C."/>
            <person name="Potier S."/>
            <person name="Pribylova L."/>
            <person name="Ozanne C."/>
            <person name="Richard G.-F."/>
            <person name="Sacerdot C."/>
            <person name="Straub M.-L."/>
            <person name="Talla E."/>
        </authorList>
    </citation>
    <scope>NUCLEOTIDE SEQUENCE [LARGE SCALE GENOMIC DNA]</scope>
    <source>
        <strain>ATCC 56472 / CBS 6340 / NRRL Y-8284</strain>
    </source>
</reference>
<dbReference type="EC" id="3.4.-.-" evidence="6"/>
<dbReference type="EMBL" id="CU928167">
    <property type="protein sequence ID" value="CAR22003.1"/>
    <property type="molecule type" value="Genomic_DNA"/>
</dbReference>
<dbReference type="RefSeq" id="XP_002552441.1">
    <property type="nucleotide sequence ID" value="XM_002552395.1"/>
</dbReference>
<dbReference type="SMR" id="C5DDZ2"/>
<dbReference type="FunCoup" id="C5DDZ2">
    <property type="interactions" value="20"/>
</dbReference>
<dbReference type="STRING" id="559295.C5DDZ2"/>
<dbReference type="MEROPS" id="M28.A05"/>
<dbReference type="GeneID" id="8291308"/>
<dbReference type="KEGG" id="lth:KLTH0C04972g"/>
<dbReference type="eggNOG" id="KOG2194">
    <property type="taxonomic scope" value="Eukaryota"/>
</dbReference>
<dbReference type="HOGENOM" id="CLU_006412_1_0_1"/>
<dbReference type="InParanoid" id="C5DDZ2"/>
<dbReference type="OMA" id="TPWPVTI"/>
<dbReference type="OrthoDB" id="76293at2759"/>
<dbReference type="Proteomes" id="UP000002036">
    <property type="component" value="Chromosome C"/>
</dbReference>
<dbReference type="GO" id="GO:0005774">
    <property type="term" value="C:vacuolar membrane"/>
    <property type="evidence" value="ECO:0007669"/>
    <property type="project" value="UniProtKB-SubCell"/>
</dbReference>
<dbReference type="GO" id="GO:0046872">
    <property type="term" value="F:metal ion binding"/>
    <property type="evidence" value="ECO:0007669"/>
    <property type="project" value="UniProtKB-KW"/>
</dbReference>
<dbReference type="GO" id="GO:0008235">
    <property type="term" value="F:metalloexopeptidase activity"/>
    <property type="evidence" value="ECO:0007669"/>
    <property type="project" value="InterPro"/>
</dbReference>
<dbReference type="GO" id="GO:0006508">
    <property type="term" value="P:proteolysis"/>
    <property type="evidence" value="ECO:0007669"/>
    <property type="project" value="UniProtKB-KW"/>
</dbReference>
<dbReference type="CDD" id="cd03875">
    <property type="entry name" value="M28_Fxna_like"/>
    <property type="match status" value="1"/>
</dbReference>
<dbReference type="Gene3D" id="3.40.630.10">
    <property type="entry name" value="Zn peptidases"/>
    <property type="match status" value="1"/>
</dbReference>
<dbReference type="InterPro" id="IPR048024">
    <property type="entry name" value="Fxna-like_M28_dom"/>
</dbReference>
<dbReference type="InterPro" id="IPR045175">
    <property type="entry name" value="M28_fam"/>
</dbReference>
<dbReference type="InterPro" id="IPR007484">
    <property type="entry name" value="Peptidase_M28"/>
</dbReference>
<dbReference type="InterPro" id="IPR053975">
    <property type="entry name" value="PFF1_C"/>
</dbReference>
<dbReference type="InterPro" id="IPR053976">
    <property type="entry name" value="PFF1_TM"/>
</dbReference>
<dbReference type="PANTHER" id="PTHR12147">
    <property type="entry name" value="METALLOPEPTIDASE M28 FAMILY MEMBER"/>
    <property type="match status" value="1"/>
</dbReference>
<dbReference type="PANTHER" id="PTHR12147:SF58">
    <property type="entry name" value="VACUOLAR MEMBRANE PROTEASE"/>
    <property type="match status" value="1"/>
</dbReference>
<dbReference type="Pfam" id="PF04389">
    <property type="entry name" value="Peptidase_M28"/>
    <property type="match status" value="1"/>
</dbReference>
<dbReference type="Pfam" id="PF22250">
    <property type="entry name" value="PFF1_C"/>
    <property type="match status" value="1"/>
</dbReference>
<dbReference type="Pfam" id="PF22251">
    <property type="entry name" value="PFF1_TM"/>
    <property type="match status" value="2"/>
</dbReference>
<dbReference type="SUPFAM" id="SSF53187">
    <property type="entry name" value="Zn-dependent exopeptidases"/>
    <property type="match status" value="1"/>
</dbReference>
<sequence>MLAQFLRSLFRFRKTTVSVLLVATYVVVFLLNVWDRIRYQYSLPEDNKHHKQLLDASWIDLQSITRKPHPYTSRENDAVHDFLLHRVTELVEGAPHAEVSDDYKEGNHLVFKQPDVFNSSSTESRIVSFESSNIVVKITGSQPELPGLLISAHFDSVPTALGATDDGVGIVTLLALITRYAKKQPRRTLVFNLNNNEEFGLLGASAFLNHRWRPLVDYVLNLEGTGAGGKAVLFRTSDTNTASIYKNAVKTQPFGNSIYQQAFYDRYISSETDYKVYEQAGLRGWDIAFYKPRALYHTIKDSTQFTSQASLWNMMHASLQLADFIAFESFEDEPKDRSPAVYFDIIGTFFVTASTKDLFTLNCVVLSVIPVIILVLEFVIQRRKTRERNPLLVWLRLPFSMFISYLVTATFRSSLFRVNPLIFSRDYVSPTIGFSFTFLILNYLVLSLLEYLAPSRDLKTVSFVELFFGMWIALLWATIRLCTSKYTATGVYPITVLYLLMSFGAIVGLVCSAFKRKHSVVKAKDSEETAAPNTYSSIEESPQQATNTEAPNENSPEEHDERAPLLRASNSSQVSSVTNVSEAPSSALKAFVVSALNYDWSVQFLAVVPLASFFVIMCLSLILDGIYQTCQEGFQATWNVSKISMLGGMLLAIPVLPFCYKLNYFVSMVLLFAAASAGIFSFERAPFTESSPLKLRFSQELNLHDELGFSTVNVFGRQGAGIEQILRNIPSTQNAHSNVECTSNGQGSETCRYAGPRPHLVSSSSIPELSDILSIKVLSNNRKSSGRSSYEPINAELVINVKENRLCTIGFNSSQFAEHDYGQSPVKQVTIFGNAHHDNRTRSQLSTLDGLSRDDEENRIFKWNRGINSLQLHKLDFERNYYHVGIQWMPTILSQDADEESSDALGLKIRCFWGEYDSVSIINGEVKRKVPALDELLAYSPKEVSFSNREAGLVIVNDYIEL</sequence>
<proteinExistence type="inferred from homology"/>
<name>PFF1_LACTC</name>
<accession>C5DDZ2</accession>
<gene>
    <name type="ordered locus">KLTH0C04972g</name>
</gene>
<keyword id="KW-0325">Glycoprotein</keyword>
<keyword id="KW-0378">Hydrolase</keyword>
<keyword id="KW-0472">Membrane</keyword>
<keyword id="KW-0479">Metal-binding</keyword>
<keyword id="KW-0482">Metalloprotease</keyword>
<keyword id="KW-0645">Protease</keyword>
<keyword id="KW-1185">Reference proteome</keyword>
<keyword id="KW-0812">Transmembrane</keyword>
<keyword id="KW-1133">Transmembrane helix</keyword>
<keyword id="KW-0926">Vacuole</keyword>
<keyword id="KW-0862">Zinc</keyword>
<comment type="function">
    <text evidence="1">May be involved in vacuolar sorting and osmoregulation.</text>
</comment>
<comment type="cofactor">
    <cofactor evidence="2">
        <name>Zn(2+)</name>
        <dbReference type="ChEBI" id="CHEBI:29105"/>
    </cofactor>
    <text evidence="2">Binds 2 Zn(2+) ions per subunit.</text>
</comment>
<comment type="subcellular location">
    <subcellularLocation>
        <location evidence="1">Vacuole membrane</location>
        <topology evidence="3">Multi-pass membrane protein</topology>
    </subcellularLocation>
</comment>
<comment type="similarity">
    <text evidence="6">Belongs to the peptidase M28 family.</text>
</comment>